<evidence type="ECO:0000255" key="1">
    <source>
        <dbReference type="HAMAP-Rule" id="MF_00178"/>
    </source>
</evidence>
<sequence>MNIIEANVATPDARVAITIARFNNFINDSLLEGAIDALKRIGQVKDENITVVWVPGAYELPLAAGALAKTGKYDAVIALGTVIRGGTAHFEYVAGGASNGLAHVAQDSEIPVAFGVLTTESIEQAIERAGTKAGNKGAEAALTALEMINVLKAIKA</sequence>
<dbReference type="EC" id="2.5.1.78" evidence="1"/>
<dbReference type="EMBL" id="AE005674">
    <property type="protein sequence ID" value="AAN42010.2"/>
    <property type="molecule type" value="Genomic_DNA"/>
</dbReference>
<dbReference type="EMBL" id="AF002857">
    <property type="protein sequence ID" value="AAB95440.1"/>
    <property type="molecule type" value="Genomic_DNA"/>
</dbReference>
<dbReference type="EMBL" id="AE014073">
    <property type="protein sequence ID" value="AAP15887.1"/>
    <property type="molecule type" value="Genomic_DNA"/>
</dbReference>
<dbReference type="RefSeq" id="NP_706303.2">
    <property type="nucleotide sequence ID" value="NC_004337.2"/>
</dbReference>
<dbReference type="RefSeq" id="WP_001021161.1">
    <property type="nucleotide sequence ID" value="NZ_WPGW01000023.1"/>
</dbReference>
<dbReference type="SMR" id="P61718"/>
<dbReference type="STRING" id="198214.SF0352"/>
<dbReference type="PaxDb" id="198214-SF0352"/>
<dbReference type="GeneID" id="1027531"/>
<dbReference type="GeneID" id="98391920"/>
<dbReference type="KEGG" id="sfl:SF0352"/>
<dbReference type="KEGG" id="sfx:S0360"/>
<dbReference type="PATRIC" id="fig|198214.7.peg.403"/>
<dbReference type="HOGENOM" id="CLU_089358_1_1_6"/>
<dbReference type="UniPathway" id="UPA00275">
    <property type="reaction ID" value="UER00404"/>
</dbReference>
<dbReference type="Proteomes" id="UP000001006">
    <property type="component" value="Chromosome"/>
</dbReference>
<dbReference type="Proteomes" id="UP000002673">
    <property type="component" value="Chromosome"/>
</dbReference>
<dbReference type="GO" id="GO:0005829">
    <property type="term" value="C:cytosol"/>
    <property type="evidence" value="ECO:0007669"/>
    <property type="project" value="TreeGrafter"/>
</dbReference>
<dbReference type="GO" id="GO:0009349">
    <property type="term" value="C:riboflavin synthase complex"/>
    <property type="evidence" value="ECO:0007669"/>
    <property type="project" value="InterPro"/>
</dbReference>
<dbReference type="GO" id="GO:0000906">
    <property type="term" value="F:6,7-dimethyl-8-ribityllumazine synthase activity"/>
    <property type="evidence" value="ECO:0007669"/>
    <property type="project" value="UniProtKB-UniRule"/>
</dbReference>
<dbReference type="GO" id="GO:0009231">
    <property type="term" value="P:riboflavin biosynthetic process"/>
    <property type="evidence" value="ECO:0007669"/>
    <property type="project" value="UniProtKB-UniRule"/>
</dbReference>
<dbReference type="CDD" id="cd09209">
    <property type="entry name" value="Lumazine_synthase-I"/>
    <property type="match status" value="1"/>
</dbReference>
<dbReference type="FunFam" id="3.40.50.960:FF:000001">
    <property type="entry name" value="6,7-dimethyl-8-ribityllumazine synthase"/>
    <property type="match status" value="1"/>
</dbReference>
<dbReference type="Gene3D" id="3.40.50.960">
    <property type="entry name" value="Lumazine/riboflavin synthase"/>
    <property type="match status" value="1"/>
</dbReference>
<dbReference type="HAMAP" id="MF_00178">
    <property type="entry name" value="Lumazine_synth"/>
    <property type="match status" value="1"/>
</dbReference>
<dbReference type="InterPro" id="IPR034964">
    <property type="entry name" value="LS"/>
</dbReference>
<dbReference type="InterPro" id="IPR002180">
    <property type="entry name" value="LS/RS"/>
</dbReference>
<dbReference type="InterPro" id="IPR036467">
    <property type="entry name" value="LS/RS_sf"/>
</dbReference>
<dbReference type="NCBIfam" id="TIGR00114">
    <property type="entry name" value="lumazine-synth"/>
    <property type="match status" value="1"/>
</dbReference>
<dbReference type="NCBIfam" id="NF000812">
    <property type="entry name" value="PRK00061.1-4"/>
    <property type="match status" value="1"/>
</dbReference>
<dbReference type="PANTHER" id="PTHR21058:SF0">
    <property type="entry name" value="6,7-DIMETHYL-8-RIBITYLLUMAZINE SYNTHASE"/>
    <property type="match status" value="1"/>
</dbReference>
<dbReference type="PANTHER" id="PTHR21058">
    <property type="entry name" value="6,7-DIMETHYL-8-RIBITYLLUMAZINE SYNTHASE DMRL SYNTHASE LUMAZINE SYNTHASE"/>
    <property type="match status" value="1"/>
</dbReference>
<dbReference type="Pfam" id="PF00885">
    <property type="entry name" value="DMRL_synthase"/>
    <property type="match status" value="1"/>
</dbReference>
<dbReference type="SUPFAM" id="SSF52121">
    <property type="entry name" value="Lumazine synthase"/>
    <property type="match status" value="1"/>
</dbReference>
<accession>P61718</accession>
<accession>P25540</accession>
<accession>P77114</accession>
<reference key="1">
    <citation type="submission" date="1997-05" db="EMBL/GenBank/DDBJ databases">
        <title>Cytochrome bd controls in vivo virulence and cell-to-cell spread in Shigella flexneri.</title>
        <authorList>
            <person name="Way S.S."/>
            <person name="Sallustio S."/>
            <person name="Magliozzo R."/>
            <person name="Goldberg M.B."/>
        </authorList>
    </citation>
    <scope>NUCLEOTIDE SEQUENCE [GENOMIC DNA]</scope>
    <source>
        <strain>ATCC 700930 / 2457T / Serotype 2a</strain>
    </source>
</reference>
<reference key="2">
    <citation type="journal article" date="2002" name="Nucleic Acids Res.">
        <title>Genome sequence of Shigella flexneri 2a: insights into pathogenicity through comparison with genomes of Escherichia coli K12 and O157.</title>
        <authorList>
            <person name="Jin Q."/>
            <person name="Yuan Z."/>
            <person name="Xu J."/>
            <person name="Wang Y."/>
            <person name="Shen Y."/>
            <person name="Lu W."/>
            <person name="Wang J."/>
            <person name="Liu H."/>
            <person name="Yang J."/>
            <person name="Yang F."/>
            <person name="Zhang X."/>
            <person name="Zhang J."/>
            <person name="Yang G."/>
            <person name="Wu H."/>
            <person name="Qu D."/>
            <person name="Dong J."/>
            <person name="Sun L."/>
            <person name="Xue Y."/>
            <person name="Zhao A."/>
            <person name="Gao Y."/>
            <person name="Zhu J."/>
            <person name="Kan B."/>
            <person name="Ding K."/>
            <person name="Chen S."/>
            <person name="Cheng H."/>
            <person name="Yao Z."/>
            <person name="He B."/>
            <person name="Chen R."/>
            <person name="Ma D."/>
            <person name="Qiang B."/>
            <person name="Wen Y."/>
            <person name="Hou Y."/>
            <person name="Yu J."/>
        </authorList>
    </citation>
    <scope>NUCLEOTIDE SEQUENCE [LARGE SCALE GENOMIC DNA]</scope>
    <source>
        <strain>301 / Serotype 2a</strain>
    </source>
</reference>
<reference key="3">
    <citation type="journal article" date="2003" name="Infect. Immun.">
        <title>Complete genome sequence and comparative genomics of Shigella flexneri serotype 2a strain 2457T.</title>
        <authorList>
            <person name="Wei J."/>
            <person name="Goldberg M.B."/>
            <person name="Burland V."/>
            <person name="Venkatesan M.M."/>
            <person name="Deng W."/>
            <person name="Fournier G."/>
            <person name="Mayhew G.F."/>
            <person name="Plunkett G. III"/>
            <person name="Rose D.J."/>
            <person name="Darling A."/>
            <person name="Mau B."/>
            <person name="Perna N.T."/>
            <person name="Payne S.M."/>
            <person name="Runyen-Janecky L.J."/>
            <person name="Zhou S."/>
            <person name="Schwartz D.C."/>
            <person name="Blattner F.R."/>
        </authorList>
    </citation>
    <scope>NUCLEOTIDE SEQUENCE [LARGE SCALE GENOMIC DNA]</scope>
    <source>
        <strain>ATCC 700930 / 2457T / Serotype 2a</strain>
    </source>
</reference>
<name>RISB_SHIFL</name>
<gene>
    <name evidence="1" type="primary">ribH</name>
    <name type="synonym">ribE</name>
    <name type="ordered locus">SF0352</name>
    <name type="ordered locus">S0360</name>
</gene>
<protein>
    <recommendedName>
        <fullName evidence="1">6,7-dimethyl-8-ribityllumazine synthase</fullName>
        <shortName evidence="1">DMRL synthase</shortName>
        <shortName evidence="1">LS</shortName>
        <shortName evidence="1">Lumazine synthase</shortName>
        <ecNumber evidence="1">2.5.1.78</ecNumber>
    </recommendedName>
</protein>
<comment type="function">
    <text evidence="1">Catalyzes the formation of 6,7-dimethyl-8-ribityllumazine by condensation of 5-amino-6-(D-ribitylamino)uracil with 3,4-dihydroxy-2-butanone 4-phosphate. This is the penultimate step in the biosynthesis of riboflavin.</text>
</comment>
<comment type="catalytic activity">
    <reaction evidence="1">
        <text>(2S)-2-hydroxy-3-oxobutyl phosphate + 5-amino-6-(D-ribitylamino)uracil = 6,7-dimethyl-8-(1-D-ribityl)lumazine + phosphate + 2 H2O + H(+)</text>
        <dbReference type="Rhea" id="RHEA:26152"/>
        <dbReference type="ChEBI" id="CHEBI:15377"/>
        <dbReference type="ChEBI" id="CHEBI:15378"/>
        <dbReference type="ChEBI" id="CHEBI:15934"/>
        <dbReference type="ChEBI" id="CHEBI:43474"/>
        <dbReference type="ChEBI" id="CHEBI:58201"/>
        <dbReference type="ChEBI" id="CHEBI:58830"/>
        <dbReference type="EC" id="2.5.1.78"/>
    </reaction>
</comment>
<comment type="pathway">
    <text evidence="1">Cofactor biosynthesis; riboflavin biosynthesis; riboflavin from 2-hydroxy-3-oxobutyl phosphate and 5-amino-6-(D-ribitylamino)uracil: step 1/2.</text>
</comment>
<comment type="subunit">
    <text evidence="1">Forms an icosahedral capsid composed of 60 subunits, arranged as a dodecamer of pentamers.</text>
</comment>
<comment type="similarity">
    <text evidence="1">Belongs to the DMRL synthase family.</text>
</comment>
<proteinExistence type="inferred from homology"/>
<organism>
    <name type="scientific">Shigella flexneri</name>
    <dbReference type="NCBI Taxonomy" id="623"/>
    <lineage>
        <taxon>Bacteria</taxon>
        <taxon>Pseudomonadati</taxon>
        <taxon>Pseudomonadota</taxon>
        <taxon>Gammaproteobacteria</taxon>
        <taxon>Enterobacterales</taxon>
        <taxon>Enterobacteriaceae</taxon>
        <taxon>Shigella</taxon>
    </lineage>
</organism>
<feature type="chain" id="PRO_0000134803" description="6,7-dimethyl-8-ribityllumazine synthase">
    <location>
        <begin position="1"/>
        <end position="156"/>
    </location>
</feature>
<feature type="active site" description="Proton donor" evidence="1">
    <location>
        <position position="89"/>
    </location>
</feature>
<feature type="binding site" evidence="1">
    <location>
        <position position="22"/>
    </location>
    <ligand>
        <name>5-amino-6-(D-ribitylamino)uracil</name>
        <dbReference type="ChEBI" id="CHEBI:15934"/>
    </ligand>
</feature>
<feature type="binding site" evidence="1">
    <location>
        <begin position="57"/>
        <end position="59"/>
    </location>
    <ligand>
        <name>5-amino-6-(D-ribitylamino)uracil</name>
        <dbReference type="ChEBI" id="CHEBI:15934"/>
    </ligand>
</feature>
<feature type="binding site" evidence="1">
    <location>
        <begin position="81"/>
        <end position="83"/>
    </location>
    <ligand>
        <name>5-amino-6-(D-ribitylamino)uracil</name>
        <dbReference type="ChEBI" id="CHEBI:15934"/>
    </ligand>
</feature>
<feature type="binding site" evidence="1">
    <location>
        <begin position="86"/>
        <end position="87"/>
    </location>
    <ligand>
        <name>(2S)-2-hydroxy-3-oxobutyl phosphate</name>
        <dbReference type="ChEBI" id="CHEBI:58830"/>
    </ligand>
</feature>
<feature type="binding site" evidence="1">
    <location>
        <position position="114"/>
    </location>
    <ligand>
        <name>5-amino-6-(D-ribitylamino)uracil</name>
        <dbReference type="ChEBI" id="CHEBI:15934"/>
    </ligand>
</feature>
<feature type="binding site" evidence="1">
    <location>
        <position position="128"/>
    </location>
    <ligand>
        <name>(2S)-2-hydroxy-3-oxobutyl phosphate</name>
        <dbReference type="ChEBI" id="CHEBI:58830"/>
    </ligand>
</feature>
<keyword id="KW-1185">Reference proteome</keyword>
<keyword id="KW-0686">Riboflavin biosynthesis</keyword>
<keyword id="KW-0808">Transferase</keyword>